<evidence type="ECO:0000250" key="1"/>
<evidence type="ECO:0000255" key="2">
    <source>
        <dbReference type="PROSITE-ProRule" id="PRU00541"/>
    </source>
</evidence>
<evidence type="ECO:0000255" key="3">
    <source>
        <dbReference type="PROSITE-ProRule" id="PRU00542"/>
    </source>
</evidence>
<evidence type="ECO:0000256" key="4">
    <source>
        <dbReference type="SAM" id="MobiDB-lite"/>
    </source>
</evidence>
<evidence type="ECO:0000305" key="5"/>
<accession>Q6CB69</accession>
<gene>
    <name type="primary">DED1</name>
    <name type="ordered locus">YALI0C21472g</name>
</gene>
<dbReference type="EC" id="3.6.4.13"/>
<dbReference type="EMBL" id="CR382129">
    <property type="protein sequence ID" value="CAG82413.1"/>
    <property type="molecule type" value="Genomic_DNA"/>
</dbReference>
<dbReference type="RefSeq" id="XP_502093.1">
    <property type="nucleotide sequence ID" value="XM_502093.1"/>
</dbReference>
<dbReference type="SMR" id="Q6CB69"/>
<dbReference type="FunCoup" id="Q6CB69">
    <property type="interactions" value="1348"/>
</dbReference>
<dbReference type="STRING" id="284591.Q6CB69"/>
<dbReference type="EnsemblFungi" id="CAG82413">
    <property type="protein sequence ID" value="CAG82413"/>
    <property type="gene ID" value="YALI0_C21472g"/>
</dbReference>
<dbReference type="KEGG" id="yli:2909846"/>
<dbReference type="VEuPathDB" id="FungiDB:YALI0_C21472g"/>
<dbReference type="HOGENOM" id="CLU_003041_16_3_1"/>
<dbReference type="InParanoid" id="Q6CB69"/>
<dbReference type="OMA" id="CYRSWVR"/>
<dbReference type="OrthoDB" id="2265at4891"/>
<dbReference type="Proteomes" id="UP000001300">
    <property type="component" value="Chromosome C"/>
</dbReference>
<dbReference type="GO" id="GO:0005737">
    <property type="term" value="C:cytoplasm"/>
    <property type="evidence" value="ECO:0007669"/>
    <property type="project" value="UniProtKB-SubCell"/>
</dbReference>
<dbReference type="GO" id="GO:0005634">
    <property type="term" value="C:nucleus"/>
    <property type="evidence" value="ECO:0000318"/>
    <property type="project" value="GO_Central"/>
</dbReference>
<dbReference type="GO" id="GO:0005681">
    <property type="term" value="C:spliceosomal complex"/>
    <property type="evidence" value="ECO:0007669"/>
    <property type="project" value="EnsemblFungi"/>
</dbReference>
<dbReference type="GO" id="GO:0005524">
    <property type="term" value="F:ATP binding"/>
    <property type="evidence" value="ECO:0007669"/>
    <property type="project" value="UniProtKB-KW"/>
</dbReference>
<dbReference type="GO" id="GO:0016887">
    <property type="term" value="F:ATP hydrolysis activity"/>
    <property type="evidence" value="ECO:0007669"/>
    <property type="project" value="RHEA"/>
</dbReference>
<dbReference type="GO" id="GO:0003729">
    <property type="term" value="F:mRNA binding"/>
    <property type="evidence" value="ECO:0000318"/>
    <property type="project" value="GO_Central"/>
</dbReference>
<dbReference type="GO" id="GO:0003724">
    <property type="term" value="F:RNA helicase activity"/>
    <property type="evidence" value="ECO:0000318"/>
    <property type="project" value="GO_Central"/>
</dbReference>
<dbReference type="GO" id="GO:0003743">
    <property type="term" value="F:translation initiation factor activity"/>
    <property type="evidence" value="ECO:0007669"/>
    <property type="project" value="UniProtKB-KW"/>
</dbReference>
<dbReference type="GO" id="GO:0002183">
    <property type="term" value="P:cytoplasmic translational initiation"/>
    <property type="evidence" value="ECO:0007669"/>
    <property type="project" value="EnsemblFungi"/>
</dbReference>
<dbReference type="GO" id="GO:1990625">
    <property type="term" value="P:negative regulation of cytoplasmic translational initiation in response to stress"/>
    <property type="evidence" value="ECO:0007669"/>
    <property type="project" value="EnsemblFungi"/>
</dbReference>
<dbReference type="GO" id="GO:0031047">
    <property type="term" value="P:regulatory ncRNA-mediated gene silencing"/>
    <property type="evidence" value="ECO:0007669"/>
    <property type="project" value="EnsemblFungi"/>
</dbReference>
<dbReference type="CDD" id="cd18787">
    <property type="entry name" value="SF2_C_DEAD"/>
    <property type="match status" value="1"/>
</dbReference>
<dbReference type="FunFam" id="3.40.50.300:FF:000160">
    <property type="entry name" value="ATP-dependent RNA helicase DDX3X"/>
    <property type="match status" value="1"/>
</dbReference>
<dbReference type="FunFam" id="3.40.50.300:FF:000008">
    <property type="entry name" value="ATP-dependent RNA helicase RhlB"/>
    <property type="match status" value="1"/>
</dbReference>
<dbReference type="Gene3D" id="3.40.50.300">
    <property type="entry name" value="P-loop containing nucleotide triphosphate hydrolases"/>
    <property type="match status" value="2"/>
</dbReference>
<dbReference type="InterPro" id="IPR011545">
    <property type="entry name" value="DEAD/DEAH_box_helicase_dom"/>
</dbReference>
<dbReference type="InterPro" id="IPR014001">
    <property type="entry name" value="Helicase_ATP-bd"/>
</dbReference>
<dbReference type="InterPro" id="IPR001650">
    <property type="entry name" value="Helicase_C-like"/>
</dbReference>
<dbReference type="InterPro" id="IPR027417">
    <property type="entry name" value="P-loop_NTPase"/>
</dbReference>
<dbReference type="InterPro" id="IPR000629">
    <property type="entry name" value="RNA-helicase_DEAD-box_CS"/>
</dbReference>
<dbReference type="InterPro" id="IPR014014">
    <property type="entry name" value="RNA_helicase_DEAD_Q_motif"/>
</dbReference>
<dbReference type="PANTHER" id="PTHR47958">
    <property type="entry name" value="ATP-DEPENDENT RNA HELICASE DBP3"/>
    <property type="match status" value="1"/>
</dbReference>
<dbReference type="Pfam" id="PF00270">
    <property type="entry name" value="DEAD"/>
    <property type="match status" value="1"/>
</dbReference>
<dbReference type="Pfam" id="PF00271">
    <property type="entry name" value="Helicase_C"/>
    <property type="match status" value="1"/>
</dbReference>
<dbReference type="SMART" id="SM00487">
    <property type="entry name" value="DEXDc"/>
    <property type="match status" value="1"/>
</dbReference>
<dbReference type="SMART" id="SM00490">
    <property type="entry name" value="HELICc"/>
    <property type="match status" value="1"/>
</dbReference>
<dbReference type="SUPFAM" id="SSF52540">
    <property type="entry name" value="P-loop containing nucleoside triphosphate hydrolases"/>
    <property type="match status" value="1"/>
</dbReference>
<dbReference type="PROSITE" id="PS00039">
    <property type="entry name" value="DEAD_ATP_HELICASE"/>
    <property type="match status" value="1"/>
</dbReference>
<dbReference type="PROSITE" id="PS51192">
    <property type="entry name" value="HELICASE_ATP_BIND_1"/>
    <property type="match status" value="1"/>
</dbReference>
<dbReference type="PROSITE" id="PS51194">
    <property type="entry name" value="HELICASE_CTER"/>
    <property type="match status" value="1"/>
</dbReference>
<dbReference type="PROSITE" id="PS51195">
    <property type="entry name" value="Q_MOTIF"/>
    <property type="match status" value="1"/>
</dbReference>
<keyword id="KW-0067">ATP-binding</keyword>
<keyword id="KW-0963">Cytoplasm</keyword>
<keyword id="KW-0347">Helicase</keyword>
<keyword id="KW-0378">Hydrolase</keyword>
<keyword id="KW-0396">Initiation factor</keyword>
<keyword id="KW-0547">Nucleotide-binding</keyword>
<keyword id="KW-0648">Protein biosynthesis</keyword>
<keyword id="KW-1185">Reference proteome</keyword>
<keyword id="KW-0694">RNA-binding</keyword>
<organism>
    <name type="scientific">Yarrowia lipolytica (strain CLIB 122 / E 150)</name>
    <name type="common">Yeast</name>
    <name type="synonym">Candida lipolytica</name>
    <dbReference type="NCBI Taxonomy" id="284591"/>
    <lineage>
        <taxon>Eukaryota</taxon>
        <taxon>Fungi</taxon>
        <taxon>Dikarya</taxon>
        <taxon>Ascomycota</taxon>
        <taxon>Saccharomycotina</taxon>
        <taxon>Dipodascomycetes</taxon>
        <taxon>Dipodascales</taxon>
        <taxon>Dipodascales incertae sedis</taxon>
        <taxon>Yarrowia</taxon>
    </lineage>
</organism>
<protein>
    <recommendedName>
        <fullName>ATP-dependent RNA helicase DED1</fullName>
        <ecNumber>3.6.4.13</ecNumber>
    </recommendedName>
</protein>
<comment type="function">
    <text evidence="1">ATP-binding RNA helicase involved in translation initiation. Remodels RNA in response to ADP and ATP concentrations by facilitating disruption, but also formation of RNA duplexes (By similarity).</text>
</comment>
<comment type="catalytic activity">
    <reaction>
        <text>ATP + H2O = ADP + phosphate + H(+)</text>
        <dbReference type="Rhea" id="RHEA:13065"/>
        <dbReference type="ChEBI" id="CHEBI:15377"/>
        <dbReference type="ChEBI" id="CHEBI:15378"/>
        <dbReference type="ChEBI" id="CHEBI:30616"/>
        <dbReference type="ChEBI" id="CHEBI:43474"/>
        <dbReference type="ChEBI" id="CHEBI:456216"/>
        <dbReference type="EC" id="3.6.4.13"/>
    </reaction>
</comment>
<comment type="subcellular location">
    <subcellularLocation>
        <location evidence="1">Cytoplasm</location>
    </subcellularLocation>
</comment>
<comment type="domain">
    <text>The Q motif is unique to and characteristic of the DEAD box family of RNA helicases and controls ATP binding and hydrolysis.</text>
</comment>
<comment type="similarity">
    <text evidence="5">Belongs to the DEAD box helicase family. DDX3/DED1 subfamily.</text>
</comment>
<reference key="1">
    <citation type="journal article" date="2004" name="Nature">
        <title>Genome evolution in yeasts.</title>
        <authorList>
            <person name="Dujon B."/>
            <person name="Sherman D."/>
            <person name="Fischer G."/>
            <person name="Durrens P."/>
            <person name="Casaregola S."/>
            <person name="Lafontaine I."/>
            <person name="de Montigny J."/>
            <person name="Marck C."/>
            <person name="Neuveglise C."/>
            <person name="Talla E."/>
            <person name="Goffard N."/>
            <person name="Frangeul L."/>
            <person name="Aigle M."/>
            <person name="Anthouard V."/>
            <person name="Babour A."/>
            <person name="Barbe V."/>
            <person name="Barnay S."/>
            <person name="Blanchin S."/>
            <person name="Beckerich J.-M."/>
            <person name="Beyne E."/>
            <person name="Bleykasten C."/>
            <person name="Boisrame A."/>
            <person name="Boyer J."/>
            <person name="Cattolico L."/>
            <person name="Confanioleri F."/>
            <person name="de Daruvar A."/>
            <person name="Despons L."/>
            <person name="Fabre E."/>
            <person name="Fairhead C."/>
            <person name="Ferry-Dumazet H."/>
            <person name="Groppi A."/>
            <person name="Hantraye F."/>
            <person name="Hennequin C."/>
            <person name="Jauniaux N."/>
            <person name="Joyet P."/>
            <person name="Kachouri R."/>
            <person name="Kerrest A."/>
            <person name="Koszul R."/>
            <person name="Lemaire M."/>
            <person name="Lesur I."/>
            <person name="Ma L."/>
            <person name="Muller H."/>
            <person name="Nicaud J.-M."/>
            <person name="Nikolski M."/>
            <person name="Oztas S."/>
            <person name="Ozier-Kalogeropoulos O."/>
            <person name="Pellenz S."/>
            <person name="Potier S."/>
            <person name="Richard G.-F."/>
            <person name="Straub M.-L."/>
            <person name="Suleau A."/>
            <person name="Swennen D."/>
            <person name="Tekaia F."/>
            <person name="Wesolowski-Louvel M."/>
            <person name="Westhof E."/>
            <person name="Wirth B."/>
            <person name="Zeniou-Meyer M."/>
            <person name="Zivanovic Y."/>
            <person name="Bolotin-Fukuhara M."/>
            <person name="Thierry A."/>
            <person name="Bouchier C."/>
            <person name="Caudron B."/>
            <person name="Scarpelli C."/>
            <person name="Gaillardin C."/>
            <person name="Weissenbach J."/>
            <person name="Wincker P."/>
            <person name="Souciet J.-L."/>
        </authorList>
    </citation>
    <scope>NUCLEOTIDE SEQUENCE [LARGE SCALE GENOMIC DNA]</scope>
    <source>
        <strain>CLIB 122 / E 150</strain>
    </source>
</reference>
<sequence>MSELENGVKSLNLNNDTPAAPRSKYVPPHRAKAAATGNGTSNSAPSNDRREAGRNLYSQYSNSFQNNSRGSYGGGYGGGRGGRGGRSWGNDGGYRGGFRDPSQGSFVDGKHVPGPRNERTEVEIFGVANDERFQSTGINFDNYDEIPVEATGNDVPEPINAFTSPPLEEHLLTNIKLARYNKPTPVQKYSVPIVAAGRDLMACAQTGSGKTGGFLFPVLSQSFFHGPSPTPQPTGPRHMHKKAYPTALVLAPTRELVSQIYDEAKKFAYRSWVRPCVVYGGADIGEQMRNIERGCDLLVAAPGRLVDLIDRGKVSLENIKYLVLDEADRMLDMGFEPQIRAIVQGSGMPDVNERQTLMFSATFPRNIQMLARDFLKDYIFLSVGRVGSTSENITQKVEYVEDGDKISALLDILSAAGKGLTLVFVETKRGADYLCDVLQSEDFPATSIHGDRSQRDRERALEMFRDGTTPILVATAVAARGLDIPNVTHVVNYDLPTDIDDYVHRIGRTGRAGNTGIATAFFNRGNKGIVRELIDILKEAHQDVPQFLESTAREASYGGRGGGRGRGGFGGGRSRATQDFRKQGGGFGSNDRFGGSSGGSSYGGGSSYGNQGGNNNWW</sequence>
<name>DED1_YARLI</name>
<feature type="chain" id="PRO_0000232163" description="ATP-dependent RNA helicase DED1">
    <location>
        <begin position="1"/>
        <end position="618"/>
    </location>
</feature>
<feature type="domain" description="Helicase ATP-binding" evidence="2">
    <location>
        <begin position="191"/>
        <end position="381"/>
    </location>
</feature>
<feature type="domain" description="Helicase C-terminal" evidence="3">
    <location>
        <begin position="392"/>
        <end position="552"/>
    </location>
</feature>
<feature type="region of interest" description="Disordered" evidence="4">
    <location>
        <begin position="1"/>
        <end position="116"/>
    </location>
</feature>
<feature type="region of interest" description="Disordered" evidence="4">
    <location>
        <begin position="552"/>
        <end position="618"/>
    </location>
</feature>
<feature type="short sequence motif" description="Q motif">
    <location>
        <begin position="160"/>
        <end position="188"/>
    </location>
</feature>
<feature type="short sequence motif" description="DEAD box">
    <location>
        <begin position="325"/>
        <end position="328"/>
    </location>
</feature>
<feature type="compositionally biased region" description="Polar residues" evidence="4">
    <location>
        <begin position="37"/>
        <end position="46"/>
    </location>
</feature>
<feature type="compositionally biased region" description="Low complexity" evidence="4">
    <location>
        <begin position="55"/>
        <end position="70"/>
    </location>
</feature>
<feature type="compositionally biased region" description="Gly residues" evidence="4">
    <location>
        <begin position="71"/>
        <end position="96"/>
    </location>
</feature>
<feature type="compositionally biased region" description="Gly residues" evidence="4">
    <location>
        <begin position="558"/>
        <end position="573"/>
    </location>
</feature>
<feature type="compositionally biased region" description="Gly residues" evidence="4">
    <location>
        <begin position="595"/>
        <end position="612"/>
    </location>
</feature>
<feature type="binding site" evidence="2">
    <location>
        <begin position="204"/>
        <end position="211"/>
    </location>
    <ligand>
        <name>ATP</name>
        <dbReference type="ChEBI" id="CHEBI:30616"/>
    </ligand>
</feature>
<proteinExistence type="inferred from homology"/>